<accession>D4AQ83</accession>
<feature type="signal peptide" evidence="2">
    <location>
        <begin position="1"/>
        <end position="20"/>
    </location>
</feature>
<feature type="chain" id="PRO_0000434429" description="Probable circularly permuted 1,3-beta-glucanase">
    <location>
        <begin position="21"/>
        <end position="440"/>
    </location>
</feature>
<feature type="region of interest" description="Disordered" evidence="3">
    <location>
        <begin position="100"/>
        <end position="126"/>
    </location>
</feature>
<feature type="region of interest" description="Disordered" evidence="3">
    <location>
        <begin position="153"/>
        <end position="195"/>
    </location>
</feature>
<feature type="short sequence motif" description="ExDxxE motif" evidence="1">
    <location>
        <begin position="350"/>
        <end position="355"/>
    </location>
</feature>
<feature type="compositionally biased region" description="Basic and acidic residues" evidence="3">
    <location>
        <begin position="100"/>
        <end position="112"/>
    </location>
</feature>
<feature type="compositionally biased region" description="Basic residues" evidence="3">
    <location>
        <begin position="113"/>
        <end position="125"/>
    </location>
</feature>
<feature type="compositionally biased region" description="Low complexity" evidence="3">
    <location>
        <begin position="153"/>
        <end position="164"/>
    </location>
</feature>
<feature type="compositionally biased region" description="Basic and acidic residues" evidence="3">
    <location>
        <begin position="177"/>
        <end position="186"/>
    </location>
</feature>
<keyword id="KW-0020">Allergen</keyword>
<keyword id="KW-0961">Cell wall biogenesis/degradation</keyword>
<keyword id="KW-0326">Glycosidase</keyword>
<keyword id="KW-0378">Hydrolase</keyword>
<keyword id="KW-1185">Reference proteome</keyword>
<keyword id="KW-0964">Secreted</keyword>
<keyword id="KW-0732">Signal</keyword>
<dbReference type="EC" id="3.2.1.39" evidence="1"/>
<dbReference type="EMBL" id="ABSU01000005">
    <property type="protein sequence ID" value="EFE34627.1"/>
    <property type="molecule type" value="Genomic_DNA"/>
</dbReference>
<dbReference type="RefSeq" id="XP_003015267.1">
    <property type="nucleotide sequence ID" value="XM_003015221.1"/>
</dbReference>
<dbReference type="STRING" id="663331.D4AQ83"/>
<dbReference type="GeneID" id="9520991"/>
<dbReference type="KEGG" id="abe:ARB_06390"/>
<dbReference type="eggNOG" id="ENOG502QSI7">
    <property type="taxonomic scope" value="Eukaryota"/>
</dbReference>
<dbReference type="HOGENOM" id="CLU_030276_0_0_1"/>
<dbReference type="OMA" id="NQDMPAI"/>
<dbReference type="OrthoDB" id="118256at2759"/>
<dbReference type="Proteomes" id="UP000008866">
    <property type="component" value="Unassembled WGS sequence"/>
</dbReference>
<dbReference type="GO" id="GO:0005576">
    <property type="term" value="C:extracellular region"/>
    <property type="evidence" value="ECO:0007669"/>
    <property type="project" value="UniProtKB-SubCell"/>
</dbReference>
<dbReference type="GO" id="GO:0009277">
    <property type="term" value="C:fungal-type cell wall"/>
    <property type="evidence" value="ECO:0007669"/>
    <property type="project" value="TreeGrafter"/>
</dbReference>
<dbReference type="GO" id="GO:0016798">
    <property type="term" value="F:hydrolase activity, acting on glycosyl bonds"/>
    <property type="evidence" value="ECO:0007669"/>
    <property type="project" value="UniProtKB-KW"/>
</dbReference>
<dbReference type="GO" id="GO:0071555">
    <property type="term" value="P:cell wall organization"/>
    <property type="evidence" value="ECO:0007669"/>
    <property type="project" value="UniProtKB-KW"/>
</dbReference>
<dbReference type="InterPro" id="IPR018805">
    <property type="entry name" value="YJL171C/Tos1_C"/>
</dbReference>
<dbReference type="InterPro" id="IPR018807">
    <property type="entry name" value="YJL171C/Tos1_N"/>
</dbReference>
<dbReference type="PANTHER" id="PTHR31737">
    <property type="entry name" value="PROTEIN TOS1"/>
    <property type="match status" value="1"/>
</dbReference>
<dbReference type="PANTHER" id="PTHR31737:SF2">
    <property type="entry name" value="PROTEIN TOS1"/>
    <property type="match status" value="1"/>
</dbReference>
<dbReference type="Pfam" id="PF10287">
    <property type="entry name" value="YJL171C_Tos1_C"/>
    <property type="match status" value="1"/>
</dbReference>
<dbReference type="Pfam" id="PF10290">
    <property type="entry name" value="YJL171C_Tos1_N"/>
    <property type="match status" value="1"/>
</dbReference>
<reference key="1">
    <citation type="journal article" date="2011" name="Genome Biol.">
        <title>Comparative and functional genomics provide insights into the pathogenicity of dermatophytic fungi.</title>
        <authorList>
            <person name="Burmester A."/>
            <person name="Shelest E."/>
            <person name="Gloeckner G."/>
            <person name="Heddergott C."/>
            <person name="Schindler S."/>
            <person name="Staib P."/>
            <person name="Heidel A."/>
            <person name="Felder M."/>
            <person name="Petzold A."/>
            <person name="Szafranski K."/>
            <person name="Feuermann M."/>
            <person name="Pedruzzi I."/>
            <person name="Priebe S."/>
            <person name="Groth M."/>
            <person name="Winkler R."/>
            <person name="Li W."/>
            <person name="Kniemeyer O."/>
            <person name="Schroeckh V."/>
            <person name="Hertweck C."/>
            <person name="Hube B."/>
            <person name="White T.C."/>
            <person name="Platzer M."/>
            <person name="Guthke R."/>
            <person name="Heitman J."/>
            <person name="Woestemeyer J."/>
            <person name="Zipfel P.F."/>
            <person name="Monod M."/>
            <person name="Brakhage A.A."/>
        </authorList>
    </citation>
    <scope>NUCLEOTIDE SEQUENCE [LARGE SCALE GENOMIC DNA]</scope>
    <source>
        <strain>ATCC MYA-4681 / CBS 112371</strain>
    </source>
</reference>
<reference key="2">
    <citation type="journal article" date="2016" name="mSystems">
        <title>RNA Sequencing-Based Genome Reannotation of the Dermatophyte Arthroderma benhamiae and Characterization of Its Secretome and Whole Gene Expression Profile during Infection.</title>
        <authorList>
            <person name="Tran V.D."/>
            <person name="De Coi N."/>
            <person name="Feuermann M."/>
            <person name="Schmid-Siegert E."/>
            <person name="Bagut E.T."/>
            <person name="Mignon B."/>
            <person name="Waridel P."/>
            <person name="Peter C."/>
            <person name="Pradervand S."/>
            <person name="Pagni M."/>
            <person name="Monod M."/>
        </authorList>
    </citation>
    <scope>SUBCELLULAR LOCATION</scope>
    <scope>INDUCTION</scope>
</reference>
<gene>
    <name type="ORF">ARB_06390</name>
</gene>
<evidence type="ECO:0000250" key="1">
    <source>
        <dbReference type="UniProtKB" id="P38288"/>
    </source>
</evidence>
<evidence type="ECO:0000255" key="2"/>
<evidence type="ECO:0000256" key="3">
    <source>
        <dbReference type="SAM" id="MobiDB-lite"/>
    </source>
</evidence>
<evidence type="ECO:0000269" key="4">
    <source>
    </source>
</evidence>
<evidence type="ECO:0000303" key="5">
    <source>
    </source>
</evidence>
<evidence type="ECO:0000305" key="6"/>
<evidence type="ECO:0000305" key="7">
    <source>
    </source>
</evidence>
<name>PGA52_ARTBC</name>
<proteinExistence type="evidence at transcript level"/>
<protein>
    <recommendedName>
        <fullName evidence="1">Probable circularly permuted 1,3-beta-glucanase</fullName>
        <ecNumber evidence="1">3.2.1.39</ecNumber>
    </recommendedName>
    <alternativeName>
        <fullName evidence="6">Allergen Asp f 4 homolog</fullName>
    </alternativeName>
    <alternativeName>
        <fullName evidence="5">PGA52-like secreted protein ARB_06390</fullName>
    </alternativeName>
</protein>
<sequence length="440" mass="47268">MHYSLFFGAALAASVSTVSAEAGCNNDGGNWYCSAVDLITYSGFSTSGTYDLVTSMSGGKCGSEKHEYSGAFGPLGEELSIHLRGPMQLFSMAVYNRGSGEKPKRELKPSIHERRHGHSHQRFHEKRAVGDKVVAIIDGQVVSWINEYAGGAPAAPTSAPGAPGINEPQVKSNGYKGGDKPKDPKPHGPVNVAPGDWRRVALVDTDKQEAEGVSFLNNNGGWDKGVDQAFGAALKRLGLDDDFFGMGDGPNFPKDPTIPDGKELIIMSDKSCEGGSCGFTRPGADAFHGFGGEDKIFLFRVAMPLTGTRGSSIYDPKDMPAIWLLNANIPRTSQYPMDPTCSCWKSGCGEFDVLEVLAPGDKRCKSTYHTKQELSGGSSYYFDRPEEPITIAVVFNGDDGTLYVKTLKEGFDKFPETLSPEDVKKLCASDGKTNNFALAS</sequence>
<organism>
    <name type="scientific">Arthroderma benhamiae (strain ATCC MYA-4681 / CBS 112371)</name>
    <name type="common">Trichophyton mentagrophytes</name>
    <dbReference type="NCBI Taxonomy" id="663331"/>
    <lineage>
        <taxon>Eukaryota</taxon>
        <taxon>Fungi</taxon>
        <taxon>Dikarya</taxon>
        <taxon>Ascomycota</taxon>
        <taxon>Pezizomycotina</taxon>
        <taxon>Eurotiomycetes</taxon>
        <taxon>Eurotiomycetidae</taxon>
        <taxon>Onygenales</taxon>
        <taxon>Arthrodermataceae</taxon>
        <taxon>Trichophyton</taxon>
    </lineage>
</organism>
<comment type="function">
    <text evidence="1">Probable circularly permuted 1,3-beta-glucanase involved in cell wall modification through beta-1,3-glucan network alterations such as increased branching or remodeling.</text>
</comment>
<comment type="catalytic activity">
    <reaction evidence="1">
        <text>Hydrolysis of (1-&gt;3)-beta-D-glucosidic linkages in (1-&gt;3)-beta-D-glucans.</text>
        <dbReference type="EC" id="3.2.1.39"/>
    </reaction>
</comment>
<comment type="subcellular location">
    <subcellularLocation>
        <location evidence="4">Secreted</location>
    </subcellularLocation>
</comment>
<comment type="induction">
    <text evidence="4">Highly expressed both in vivo (during infection) and in vitro (keratin medium) conditions.</text>
</comment>
<comment type="domain">
    <text evidence="1">The conserved ExDxxE motif might be important for catalytic activity.</text>
</comment>
<comment type="allergen">
    <text evidence="7">May cause an allergic reaction in human.</text>
</comment>
<comment type="similarity">
    <text evidence="6">Belongs to the PGA52 family.</text>
</comment>